<gene>
    <name evidence="1" type="primary">macB2</name>
    <name type="ordered locus">YPA_2190</name>
</gene>
<organism>
    <name type="scientific">Yersinia pestis bv. Antiqua (strain Antiqua)</name>
    <dbReference type="NCBI Taxonomy" id="360102"/>
    <lineage>
        <taxon>Bacteria</taxon>
        <taxon>Pseudomonadati</taxon>
        <taxon>Pseudomonadota</taxon>
        <taxon>Gammaproteobacteria</taxon>
        <taxon>Enterobacterales</taxon>
        <taxon>Yersiniaceae</taxon>
        <taxon>Yersinia</taxon>
    </lineage>
</organism>
<reference key="1">
    <citation type="journal article" date="2006" name="J. Bacteriol.">
        <title>Complete genome sequence of Yersinia pestis strains Antiqua and Nepal516: evidence of gene reduction in an emerging pathogen.</title>
        <authorList>
            <person name="Chain P.S.G."/>
            <person name="Hu P."/>
            <person name="Malfatti S.A."/>
            <person name="Radnedge L."/>
            <person name="Larimer F."/>
            <person name="Vergez L.M."/>
            <person name="Worsham P."/>
            <person name="Chu M.C."/>
            <person name="Andersen G.L."/>
        </authorList>
    </citation>
    <scope>NUCLEOTIDE SEQUENCE [LARGE SCALE GENOMIC DNA]</scope>
    <source>
        <strain>Antiqua</strain>
    </source>
</reference>
<evidence type="ECO:0000255" key="1">
    <source>
        <dbReference type="HAMAP-Rule" id="MF_01720"/>
    </source>
</evidence>
<proteinExistence type="inferred from homology"/>
<dbReference type="EC" id="7.6.2.-" evidence="1"/>
<dbReference type="EMBL" id="CP000308">
    <property type="protein sequence ID" value="ABG14155.1"/>
    <property type="molecule type" value="Genomic_DNA"/>
</dbReference>
<dbReference type="RefSeq" id="WP_002208496.1">
    <property type="nucleotide sequence ID" value="NZ_CP009906.1"/>
</dbReference>
<dbReference type="SMR" id="Q1C5W7"/>
<dbReference type="KEGG" id="ypa:YPA_2190"/>
<dbReference type="Proteomes" id="UP000001971">
    <property type="component" value="Chromosome"/>
</dbReference>
<dbReference type="GO" id="GO:0005886">
    <property type="term" value="C:plasma membrane"/>
    <property type="evidence" value="ECO:0007669"/>
    <property type="project" value="UniProtKB-SubCell"/>
</dbReference>
<dbReference type="GO" id="GO:0005524">
    <property type="term" value="F:ATP binding"/>
    <property type="evidence" value="ECO:0007669"/>
    <property type="project" value="UniProtKB-KW"/>
</dbReference>
<dbReference type="GO" id="GO:0016887">
    <property type="term" value="F:ATP hydrolysis activity"/>
    <property type="evidence" value="ECO:0007669"/>
    <property type="project" value="InterPro"/>
</dbReference>
<dbReference type="GO" id="GO:0022857">
    <property type="term" value="F:transmembrane transporter activity"/>
    <property type="evidence" value="ECO:0007669"/>
    <property type="project" value="TreeGrafter"/>
</dbReference>
<dbReference type="GO" id="GO:0046677">
    <property type="term" value="P:response to antibiotic"/>
    <property type="evidence" value="ECO:0007669"/>
    <property type="project" value="UniProtKB-KW"/>
</dbReference>
<dbReference type="CDD" id="cd03255">
    <property type="entry name" value="ABC_MJ0796_LolCDE_FtsE"/>
    <property type="match status" value="1"/>
</dbReference>
<dbReference type="FunFam" id="3.40.50.300:FF:000032">
    <property type="entry name" value="Export ABC transporter ATP-binding protein"/>
    <property type="match status" value="1"/>
</dbReference>
<dbReference type="Gene3D" id="3.40.50.300">
    <property type="entry name" value="P-loop containing nucleotide triphosphate hydrolases"/>
    <property type="match status" value="1"/>
</dbReference>
<dbReference type="InterPro" id="IPR003593">
    <property type="entry name" value="AAA+_ATPase"/>
</dbReference>
<dbReference type="InterPro" id="IPR003838">
    <property type="entry name" value="ABC3_permease_C"/>
</dbReference>
<dbReference type="InterPro" id="IPR003439">
    <property type="entry name" value="ABC_transporter-like_ATP-bd"/>
</dbReference>
<dbReference type="InterPro" id="IPR017871">
    <property type="entry name" value="ABC_transporter-like_CS"/>
</dbReference>
<dbReference type="InterPro" id="IPR017911">
    <property type="entry name" value="MacB-like_ATP-bd"/>
</dbReference>
<dbReference type="InterPro" id="IPR025857">
    <property type="entry name" value="MacB_PCD"/>
</dbReference>
<dbReference type="InterPro" id="IPR050250">
    <property type="entry name" value="Macrolide_Exporter_MacB"/>
</dbReference>
<dbReference type="InterPro" id="IPR027417">
    <property type="entry name" value="P-loop_NTPase"/>
</dbReference>
<dbReference type="PANTHER" id="PTHR30572:SF14">
    <property type="entry name" value="MACROLIDE EXPORT ATP-BINDING_PERMEASE PROTEIN MACB"/>
    <property type="match status" value="1"/>
</dbReference>
<dbReference type="PANTHER" id="PTHR30572">
    <property type="entry name" value="MEMBRANE COMPONENT OF TRANSPORTER-RELATED"/>
    <property type="match status" value="1"/>
</dbReference>
<dbReference type="Pfam" id="PF00005">
    <property type="entry name" value="ABC_tran"/>
    <property type="match status" value="1"/>
</dbReference>
<dbReference type="Pfam" id="PF02687">
    <property type="entry name" value="FtsX"/>
    <property type="match status" value="1"/>
</dbReference>
<dbReference type="Pfam" id="PF12704">
    <property type="entry name" value="MacB_PCD"/>
    <property type="match status" value="1"/>
</dbReference>
<dbReference type="SMART" id="SM00382">
    <property type="entry name" value="AAA"/>
    <property type="match status" value="1"/>
</dbReference>
<dbReference type="SUPFAM" id="SSF52540">
    <property type="entry name" value="P-loop containing nucleoside triphosphate hydrolases"/>
    <property type="match status" value="1"/>
</dbReference>
<dbReference type="PROSITE" id="PS00211">
    <property type="entry name" value="ABC_TRANSPORTER_1"/>
    <property type="match status" value="1"/>
</dbReference>
<dbReference type="PROSITE" id="PS50893">
    <property type="entry name" value="ABC_TRANSPORTER_2"/>
    <property type="match status" value="1"/>
</dbReference>
<dbReference type="PROSITE" id="PS51267">
    <property type="entry name" value="MACB"/>
    <property type="match status" value="1"/>
</dbReference>
<protein>
    <recommendedName>
        <fullName evidence="1">Macrolide export ATP-binding/permease protein MacB 2</fullName>
        <ecNumber evidence="1">7.6.2.-</ecNumber>
    </recommendedName>
</protein>
<keyword id="KW-0046">Antibiotic resistance</keyword>
<keyword id="KW-0067">ATP-binding</keyword>
<keyword id="KW-0997">Cell inner membrane</keyword>
<keyword id="KW-1003">Cell membrane</keyword>
<keyword id="KW-0472">Membrane</keyword>
<keyword id="KW-0547">Nucleotide-binding</keyword>
<keyword id="KW-1278">Translocase</keyword>
<keyword id="KW-0812">Transmembrane</keyword>
<keyword id="KW-1133">Transmembrane helix</keyword>
<keyword id="KW-0813">Transport</keyword>
<accession>Q1C5W7</accession>
<feature type="chain" id="PRO_0000269989" description="Macrolide export ATP-binding/permease protein MacB 2">
    <location>
        <begin position="1"/>
        <end position="678"/>
    </location>
</feature>
<feature type="transmembrane region" description="Helical" evidence="1">
    <location>
        <begin position="303"/>
        <end position="323"/>
    </location>
</feature>
<feature type="transmembrane region" description="Helical" evidence="1">
    <location>
        <begin position="558"/>
        <end position="578"/>
    </location>
</feature>
<feature type="transmembrane region" description="Helical" evidence="1">
    <location>
        <begin position="608"/>
        <end position="628"/>
    </location>
</feature>
<feature type="transmembrane region" description="Helical" evidence="1">
    <location>
        <begin position="641"/>
        <end position="661"/>
    </location>
</feature>
<feature type="domain" description="ABC transporter" evidence="1">
    <location>
        <begin position="11"/>
        <end position="249"/>
    </location>
</feature>
<feature type="binding site" evidence="1">
    <location>
        <begin position="47"/>
        <end position="54"/>
    </location>
    <ligand>
        <name>ATP</name>
        <dbReference type="ChEBI" id="CHEBI:30616"/>
    </ligand>
</feature>
<sequence>MTGPQQGKILLRLENVSREFITGEQTVRVLNNINLTLHSGEMVAIVGTSGSGKSTLMNILGCLDKPSAGEYWVAGRIPQYLGSDALAELRREHFGFIFQRYHLLNDLSARENVEIPAIYAGIDREERRKRAVNLLSRIGLAERLDYRPSQLSGGQQQRVSIARALMNGGDVILADEPTGALDTHSGNEVLNILKDLHQQGHTVVIVTHDMSIAEHAQRIIELKDGEIIADRPRDHAQEKPKMVDIPSVIDIPSMDEKISTGAQQETEIARKPLLTRWKVQYDRLHEAFKMAILAMAAQRLRTALTMLGIIIGIASVVSVVALGKGSQQQVLANINAMGTSTLEIFPGKDFGDMRSAAIHTLRDTDADVLAQQGYIHSVTPTVSTSVTLRYGNKSVSGTVNGVGEQYFLVRGYTIAQGMAFTRTSVNDLMQDAVIDENTRDKLFPNGETPLGKVILLGSLPCRVIGVAAKKQSGFGSDENLNVWIPYTTAMKRMLGQSYLKSITVRVNDDIDLANAEQGVIKLLSQRHGTQDFFVMNTDSIRQTIQATTSTMTLLVSMIAVISLIVGGIGVMNIMLVSVTERTKEIGVRMAVGARASDIMQQFLIEAVLVCLLGGSLGVALSLGIGLLFSLFSSNFSMVYSAASIITAFVCSSLIGVIFGFFPAKRAAEMDPIRALERE</sequence>
<comment type="function">
    <text evidence="1">Part of the tripartite efflux system MacAB-TolC. MacB is a non-canonical ABC transporter that contains transmembrane domains (TMD), which form a pore in the inner membrane, and an ATP-binding domain (NBD), which is responsible for energy generation. Confers resistance against macrolides.</text>
</comment>
<comment type="subunit">
    <text evidence="1">Homodimer. Part of the tripartite efflux system MacAB-TolC, which is composed of an inner membrane transporter, MacB, a periplasmic membrane fusion protein, MacA, and an outer membrane component, TolC. The complex forms a large protein conduit and can translocate molecules across both the inner and outer membranes. Interacts with MacA.</text>
</comment>
<comment type="subcellular location">
    <subcellularLocation>
        <location evidence="1">Cell inner membrane</location>
        <topology evidence="1">Multi-pass membrane protein</topology>
    </subcellularLocation>
</comment>
<comment type="similarity">
    <text evidence="1">Belongs to the ABC transporter superfamily. Macrolide exporter (TC 3.A.1.122) family.</text>
</comment>
<name>MACB2_YERPA</name>